<protein>
    <recommendedName>
        <fullName evidence="1">Putative hydro-lyase BceJ2315_40370</fullName>
        <ecNumber evidence="1">4.2.1.-</ecNumber>
    </recommendedName>
</protein>
<accession>B4EKM1</accession>
<reference key="1">
    <citation type="journal article" date="2009" name="J. Bacteriol.">
        <title>The genome of Burkholderia cenocepacia J2315, an epidemic pathogen of cystic fibrosis patients.</title>
        <authorList>
            <person name="Holden M.T."/>
            <person name="Seth-Smith H.M."/>
            <person name="Crossman L.C."/>
            <person name="Sebaihia M."/>
            <person name="Bentley S.D."/>
            <person name="Cerdeno-Tarraga A.M."/>
            <person name="Thomson N.R."/>
            <person name="Bason N."/>
            <person name="Quail M.A."/>
            <person name="Sharp S."/>
            <person name="Cherevach I."/>
            <person name="Churcher C."/>
            <person name="Goodhead I."/>
            <person name="Hauser H."/>
            <person name="Holroyd N."/>
            <person name="Mungall K."/>
            <person name="Scott P."/>
            <person name="Walker D."/>
            <person name="White B."/>
            <person name="Rose H."/>
            <person name="Iversen P."/>
            <person name="Mil-Homens D."/>
            <person name="Rocha E.P."/>
            <person name="Fialho A.M."/>
            <person name="Baldwin A."/>
            <person name="Dowson C."/>
            <person name="Barrell B.G."/>
            <person name="Govan J.R."/>
            <person name="Vandamme P."/>
            <person name="Hart C.A."/>
            <person name="Mahenthiralingam E."/>
            <person name="Parkhill J."/>
        </authorList>
    </citation>
    <scope>NUCLEOTIDE SEQUENCE [LARGE SCALE GENOMIC DNA]</scope>
    <source>
        <strain>ATCC BAA-245 / DSM 16553 / LMG 16656 / NCTC 13227 / J2315 / CF5610</strain>
    </source>
</reference>
<feature type="chain" id="PRO_0000379825" description="Putative hydro-lyase BceJ2315_40370">
    <location>
        <begin position="1"/>
        <end position="257"/>
    </location>
</feature>
<gene>
    <name type="ordered locus">BceJ2315_40370</name>
    <name type="ORF">BCAM0576</name>
</gene>
<proteinExistence type="inferred from homology"/>
<name>Y4037_BURCJ</name>
<comment type="similarity">
    <text evidence="1">Belongs to the D-glutamate cyclase family.</text>
</comment>
<organism>
    <name type="scientific">Burkholderia cenocepacia (strain ATCC BAA-245 / DSM 16553 / LMG 16656 / NCTC 13227 / J2315 / CF5610)</name>
    <name type="common">Burkholderia cepacia (strain J2315)</name>
    <dbReference type="NCBI Taxonomy" id="216591"/>
    <lineage>
        <taxon>Bacteria</taxon>
        <taxon>Pseudomonadati</taxon>
        <taxon>Pseudomonadota</taxon>
        <taxon>Betaproteobacteria</taxon>
        <taxon>Burkholderiales</taxon>
        <taxon>Burkholderiaceae</taxon>
        <taxon>Burkholderia</taxon>
        <taxon>Burkholderia cepacia complex</taxon>
    </lineage>
</organism>
<dbReference type="EC" id="4.2.1.-" evidence="1"/>
<dbReference type="EMBL" id="AM747721">
    <property type="protein sequence ID" value="CAR54435.1"/>
    <property type="molecule type" value="Genomic_DNA"/>
</dbReference>
<dbReference type="RefSeq" id="WP_006484320.1">
    <property type="nucleotide sequence ID" value="NC_011001.1"/>
</dbReference>
<dbReference type="SMR" id="B4EKM1"/>
<dbReference type="KEGG" id="bcj:BCAM0576"/>
<dbReference type="eggNOG" id="COG4336">
    <property type="taxonomic scope" value="Bacteria"/>
</dbReference>
<dbReference type="HOGENOM" id="CLU_059759_0_0_4"/>
<dbReference type="BioCyc" id="BCEN216591:G1G1V-4545-MONOMER"/>
<dbReference type="Proteomes" id="UP000001035">
    <property type="component" value="Chromosome 2"/>
</dbReference>
<dbReference type="GO" id="GO:0016829">
    <property type="term" value="F:lyase activity"/>
    <property type="evidence" value="ECO:0007669"/>
    <property type="project" value="UniProtKB-KW"/>
</dbReference>
<dbReference type="FunFam" id="3.30.2040.10:FF:000001">
    <property type="entry name" value="D-glutamate cyclase, mitochondrial"/>
    <property type="match status" value="1"/>
</dbReference>
<dbReference type="Gene3D" id="3.40.1640.10">
    <property type="entry name" value="PSTPO5379-like"/>
    <property type="match status" value="1"/>
</dbReference>
<dbReference type="Gene3D" id="3.30.2040.10">
    <property type="entry name" value="PSTPO5379-like domain"/>
    <property type="match status" value="1"/>
</dbReference>
<dbReference type="HAMAP" id="MF_01830">
    <property type="entry name" value="Hydro_lyase"/>
    <property type="match status" value="1"/>
</dbReference>
<dbReference type="InterPro" id="IPR009906">
    <property type="entry name" value="D-Glu_cyclase"/>
</dbReference>
<dbReference type="InterPro" id="IPR038021">
    <property type="entry name" value="Putative_hydro-lyase"/>
</dbReference>
<dbReference type="InterPro" id="IPR016938">
    <property type="entry name" value="UPF0317"/>
</dbReference>
<dbReference type="NCBIfam" id="NF003969">
    <property type="entry name" value="PRK05463.1"/>
    <property type="match status" value="1"/>
</dbReference>
<dbReference type="PANTHER" id="PTHR32022">
    <property type="entry name" value="D-GLUTAMATE CYCLASE, MITOCHONDRIAL"/>
    <property type="match status" value="1"/>
</dbReference>
<dbReference type="PANTHER" id="PTHR32022:SF10">
    <property type="entry name" value="D-GLUTAMATE CYCLASE, MITOCHONDRIAL"/>
    <property type="match status" value="1"/>
</dbReference>
<dbReference type="Pfam" id="PF07286">
    <property type="entry name" value="D-Glu_cyclase"/>
    <property type="match status" value="1"/>
</dbReference>
<dbReference type="PIRSF" id="PIRSF029755">
    <property type="entry name" value="UCP029755"/>
    <property type="match status" value="1"/>
</dbReference>
<dbReference type="SUPFAM" id="SSF160920">
    <property type="entry name" value="PSTPO5379-like"/>
    <property type="match status" value="1"/>
</dbReference>
<evidence type="ECO:0000255" key="1">
    <source>
        <dbReference type="HAMAP-Rule" id="MF_01830"/>
    </source>
</evidence>
<sequence>MTPSEFRQSVRRGAFRGPTAGHCGPFAQANLAILPDAYAHDFLRFCQANPKACPLLGVGEPGAFRIAALGEDLDIRTDVPSYNVYRDGRLTERVESLEALWQDDFVVFAIGCSFSFEDMLAREGIGLRHVEEGRNVPMYRTSIANRRAGIFGGQLVVSMRPLRGADAIRAVQITSRFPGVHGAPIHIGHPRELGIDDLNAPEFGDAVTIRDGELPVFWACGVTPQTALMDAKLPIAIAHTPGHMLMTDITNASLAVF</sequence>
<keyword id="KW-0456">Lyase</keyword>